<dbReference type="EMBL" id="BX950851">
    <property type="protein sequence ID" value="CAG75268.1"/>
    <property type="molecule type" value="Genomic_DNA"/>
</dbReference>
<dbReference type="RefSeq" id="WP_011093921.1">
    <property type="nucleotide sequence ID" value="NC_004547.2"/>
</dbReference>
<dbReference type="STRING" id="218491.ECA2365"/>
<dbReference type="KEGG" id="eca:ECA2365"/>
<dbReference type="PATRIC" id="fig|218491.5.peg.2390"/>
<dbReference type="eggNOG" id="COG2983">
    <property type="taxonomic scope" value="Bacteria"/>
</dbReference>
<dbReference type="HOGENOM" id="CLU_109769_2_0_6"/>
<dbReference type="OrthoDB" id="9786855at2"/>
<dbReference type="Proteomes" id="UP000007966">
    <property type="component" value="Chromosome"/>
</dbReference>
<dbReference type="HAMAP" id="MF_00676">
    <property type="entry name" value="UPF0260"/>
    <property type="match status" value="1"/>
</dbReference>
<dbReference type="InterPro" id="IPR005358">
    <property type="entry name" value="Puta_zinc/iron-chelating_dom"/>
</dbReference>
<dbReference type="InterPro" id="IPR008228">
    <property type="entry name" value="UCP006173"/>
</dbReference>
<dbReference type="NCBIfam" id="NF003498">
    <property type="entry name" value="PRK05170.1-1"/>
    <property type="match status" value="1"/>
</dbReference>
<dbReference type="NCBIfam" id="NF003501">
    <property type="entry name" value="PRK05170.1-5"/>
    <property type="match status" value="1"/>
</dbReference>
<dbReference type="NCBIfam" id="NF003507">
    <property type="entry name" value="PRK05170.2-5"/>
    <property type="match status" value="1"/>
</dbReference>
<dbReference type="PANTHER" id="PTHR37421">
    <property type="entry name" value="UPF0260 PROTEIN YCGN"/>
    <property type="match status" value="1"/>
</dbReference>
<dbReference type="PANTHER" id="PTHR37421:SF1">
    <property type="entry name" value="UPF0260 PROTEIN YCGN"/>
    <property type="match status" value="1"/>
</dbReference>
<dbReference type="Pfam" id="PF03692">
    <property type="entry name" value="CxxCxxCC"/>
    <property type="match status" value="1"/>
</dbReference>
<dbReference type="PIRSF" id="PIRSF006173">
    <property type="entry name" value="UCP006173"/>
    <property type="match status" value="1"/>
</dbReference>
<gene>
    <name type="ordered locus">ECA2365</name>
</gene>
<evidence type="ECO:0000255" key="1">
    <source>
        <dbReference type="HAMAP-Rule" id="MF_00676"/>
    </source>
</evidence>
<accession>Q6D4M5</accession>
<name>Y2365_PECAS</name>
<sequence length="148" mass="17722">MTERPFWQQKTLSEMSDDEWESLCDGCGQCCLHKLIDEDTEEIYFTNVACNQLNIKSCQCRNYEKRFEYEPDCIKLTRENLLTFNWLPATCAYRLVHEREDLPQWHPLVCGTKTEMHRERISVRHIAVRESEVVDWQDHILNKPGWAR</sequence>
<feature type="chain" id="PRO_1000044793" description="UPF0260 protein ECA2365">
    <location>
        <begin position="1"/>
        <end position="148"/>
    </location>
</feature>
<keyword id="KW-1185">Reference proteome</keyword>
<reference key="1">
    <citation type="journal article" date="2004" name="Proc. Natl. Acad. Sci. U.S.A.">
        <title>Genome sequence of the enterobacterial phytopathogen Erwinia carotovora subsp. atroseptica and characterization of virulence factors.</title>
        <authorList>
            <person name="Bell K.S."/>
            <person name="Sebaihia M."/>
            <person name="Pritchard L."/>
            <person name="Holden M.T.G."/>
            <person name="Hyman L.J."/>
            <person name="Holeva M.C."/>
            <person name="Thomson N.R."/>
            <person name="Bentley S.D."/>
            <person name="Churcher L.J.C."/>
            <person name="Mungall K."/>
            <person name="Atkin R."/>
            <person name="Bason N."/>
            <person name="Brooks K."/>
            <person name="Chillingworth T."/>
            <person name="Clark K."/>
            <person name="Doggett J."/>
            <person name="Fraser A."/>
            <person name="Hance Z."/>
            <person name="Hauser H."/>
            <person name="Jagels K."/>
            <person name="Moule S."/>
            <person name="Norbertczak H."/>
            <person name="Ormond D."/>
            <person name="Price C."/>
            <person name="Quail M.A."/>
            <person name="Sanders M."/>
            <person name="Walker D."/>
            <person name="Whitehead S."/>
            <person name="Salmond G.P.C."/>
            <person name="Birch P.R.J."/>
            <person name="Parkhill J."/>
            <person name="Toth I.K."/>
        </authorList>
    </citation>
    <scope>NUCLEOTIDE SEQUENCE [LARGE SCALE GENOMIC DNA]</scope>
    <source>
        <strain>SCRI 1043 / ATCC BAA-672</strain>
    </source>
</reference>
<proteinExistence type="inferred from homology"/>
<protein>
    <recommendedName>
        <fullName evidence="1">UPF0260 protein ECA2365</fullName>
    </recommendedName>
</protein>
<organism>
    <name type="scientific">Pectobacterium atrosepticum (strain SCRI 1043 / ATCC BAA-672)</name>
    <name type="common">Erwinia carotovora subsp. atroseptica</name>
    <dbReference type="NCBI Taxonomy" id="218491"/>
    <lineage>
        <taxon>Bacteria</taxon>
        <taxon>Pseudomonadati</taxon>
        <taxon>Pseudomonadota</taxon>
        <taxon>Gammaproteobacteria</taxon>
        <taxon>Enterobacterales</taxon>
        <taxon>Pectobacteriaceae</taxon>
        <taxon>Pectobacterium</taxon>
    </lineage>
</organism>
<comment type="similarity">
    <text evidence="1">Belongs to the UPF0260 family.</text>
</comment>